<protein>
    <recommendedName>
        <fullName evidence="1">DNA-directed RNA polymerase subunit alpha 2</fullName>
        <shortName evidence="1">RNAP subunit alpha 2</shortName>
        <ecNumber evidence="1">2.7.7.6</ecNumber>
    </recommendedName>
    <alternativeName>
        <fullName evidence="1">RNA polymerase subunit alpha 2</fullName>
    </alternativeName>
    <alternativeName>
        <fullName evidence="1">Transcriptase subunit alpha 2</fullName>
    </alternativeName>
</protein>
<proteinExistence type="inferred from homology"/>
<reference key="1">
    <citation type="journal article" date="2005" name="Nat. Genet.">
        <title>The complete genome sequence of Francisella tularensis, the causative agent of tularemia.</title>
        <authorList>
            <person name="Larsson P."/>
            <person name="Oyston P.C.F."/>
            <person name="Chain P."/>
            <person name="Chu M.C."/>
            <person name="Duffield M."/>
            <person name="Fuxelius H.-H."/>
            <person name="Garcia E."/>
            <person name="Haelltorp G."/>
            <person name="Johansson D."/>
            <person name="Isherwood K.E."/>
            <person name="Karp P.D."/>
            <person name="Larsson E."/>
            <person name="Liu Y."/>
            <person name="Michell S."/>
            <person name="Prior J."/>
            <person name="Prior R."/>
            <person name="Malfatti S."/>
            <person name="Sjoestedt A."/>
            <person name="Svensson K."/>
            <person name="Thompson N."/>
            <person name="Vergez L."/>
            <person name="Wagg J.K."/>
            <person name="Wren B.W."/>
            <person name="Lindler L.E."/>
            <person name="Andersson S.G.E."/>
            <person name="Forsman M."/>
            <person name="Titball R.W."/>
        </authorList>
    </citation>
    <scope>NUCLEOTIDE SEQUENCE [LARGE SCALE GENOMIC DNA]</scope>
    <source>
        <strain>SCHU S4 / Schu 4</strain>
    </source>
</reference>
<keyword id="KW-0240">DNA-directed RNA polymerase</keyword>
<keyword id="KW-0548">Nucleotidyltransferase</keyword>
<keyword id="KW-1185">Reference proteome</keyword>
<keyword id="KW-0804">Transcription</keyword>
<keyword id="KW-0808">Transferase</keyword>
<evidence type="ECO:0000255" key="1">
    <source>
        <dbReference type="HAMAP-Rule" id="MF_00059"/>
    </source>
</evidence>
<dbReference type="EC" id="2.7.7.6" evidence="1"/>
<dbReference type="EMBL" id="AJ749949">
    <property type="protein sequence ID" value="CAG46075.1"/>
    <property type="molecule type" value="Genomic_DNA"/>
</dbReference>
<dbReference type="RefSeq" id="WP_003022267.1">
    <property type="nucleotide sequence ID" value="NC_006570.2"/>
</dbReference>
<dbReference type="RefSeq" id="YP_170380.1">
    <property type="nucleotide sequence ID" value="NC_006570.2"/>
</dbReference>
<dbReference type="SMR" id="Q5NF12"/>
<dbReference type="STRING" id="177416.FTT_1442c"/>
<dbReference type="DNASU" id="3191983"/>
<dbReference type="EnsemblBacteria" id="CAG46075">
    <property type="protein sequence ID" value="CAG46075"/>
    <property type="gene ID" value="FTT_1442c"/>
</dbReference>
<dbReference type="KEGG" id="ftu:FTT_1442c"/>
<dbReference type="eggNOG" id="COG0202">
    <property type="taxonomic scope" value="Bacteria"/>
</dbReference>
<dbReference type="OrthoDB" id="9805706at2"/>
<dbReference type="Proteomes" id="UP000001174">
    <property type="component" value="Chromosome"/>
</dbReference>
<dbReference type="GO" id="GO:0005737">
    <property type="term" value="C:cytoplasm"/>
    <property type="evidence" value="ECO:0007669"/>
    <property type="project" value="UniProtKB-ARBA"/>
</dbReference>
<dbReference type="GO" id="GO:0000428">
    <property type="term" value="C:DNA-directed RNA polymerase complex"/>
    <property type="evidence" value="ECO:0007669"/>
    <property type="project" value="UniProtKB-KW"/>
</dbReference>
<dbReference type="GO" id="GO:0003677">
    <property type="term" value="F:DNA binding"/>
    <property type="evidence" value="ECO:0007669"/>
    <property type="project" value="UniProtKB-UniRule"/>
</dbReference>
<dbReference type="GO" id="GO:0003899">
    <property type="term" value="F:DNA-directed RNA polymerase activity"/>
    <property type="evidence" value="ECO:0007669"/>
    <property type="project" value="UniProtKB-UniRule"/>
</dbReference>
<dbReference type="GO" id="GO:0046983">
    <property type="term" value="F:protein dimerization activity"/>
    <property type="evidence" value="ECO:0007669"/>
    <property type="project" value="InterPro"/>
</dbReference>
<dbReference type="GO" id="GO:0006351">
    <property type="term" value="P:DNA-templated transcription"/>
    <property type="evidence" value="ECO:0007669"/>
    <property type="project" value="UniProtKB-UniRule"/>
</dbReference>
<dbReference type="FunFam" id="1.10.150.20:FF:000001">
    <property type="entry name" value="DNA-directed RNA polymerase subunit alpha"/>
    <property type="match status" value="1"/>
</dbReference>
<dbReference type="Gene3D" id="1.10.150.20">
    <property type="entry name" value="5' to 3' exonuclease, C-terminal subdomain"/>
    <property type="match status" value="1"/>
</dbReference>
<dbReference type="Gene3D" id="2.170.120.12">
    <property type="entry name" value="DNA-directed RNA polymerase, insert domain"/>
    <property type="match status" value="1"/>
</dbReference>
<dbReference type="Gene3D" id="3.30.1360.10">
    <property type="entry name" value="RNA polymerase, RBP11-like subunit"/>
    <property type="match status" value="1"/>
</dbReference>
<dbReference type="HAMAP" id="MF_00059">
    <property type="entry name" value="RNApol_bact_RpoA"/>
    <property type="match status" value="1"/>
</dbReference>
<dbReference type="InterPro" id="IPR011262">
    <property type="entry name" value="DNA-dir_RNA_pol_insert"/>
</dbReference>
<dbReference type="InterPro" id="IPR011263">
    <property type="entry name" value="DNA-dir_RNA_pol_RpoA/D/Rpb3"/>
</dbReference>
<dbReference type="InterPro" id="IPR011773">
    <property type="entry name" value="DNA-dir_RpoA"/>
</dbReference>
<dbReference type="InterPro" id="IPR036603">
    <property type="entry name" value="RBP11-like"/>
</dbReference>
<dbReference type="InterPro" id="IPR011260">
    <property type="entry name" value="RNAP_asu_C"/>
</dbReference>
<dbReference type="InterPro" id="IPR036643">
    <property type="entry name" value="RNApol_insert_sf"/>
</dbReference>
<dbReference type="NCBIfam" id="NF003513">
    <property type="entry name" value="PRK05182.1-2"/>
    <property type="match status" value="1"/>
</dbReference>
<dbReference type="Pfam" id="PF01000">
    <property type="entry name" value="RNA_pol_A_bac"/>
    <property type="match status" value="1"/>
</dbReference>
<dbReference type="Pfam" id="PF03118">
    <property type="entry name" value="RNA_pol_A_CTD"/>
    <property type="match status" value="1"/>
</dbReference>
<dbReference type="Pfam" id="PF01193">
    <property type="entry name" value="RNA_pol_L"/>
    <property type="match status" value="1"/>
</dbReference>
<dbReference type="SMART" id="SM00662">
    <property type="entry name" value="RPOLD"/>
    <property type="match status" value="1"/>
</dbReference>
<dbReference type="SUPFAM" id="SSF47789">
    <property type="entry name" value="C-terminal domain of RNA polymerase alpha subunit"/>
    <property type="match status" value="1"/>
</dbReference>
<dbReference type="SUPFAM" id="SSF56553">
    <property type="entry name" value="Insert subdomain of RNA polymerase alpha subunit"/>
    <property type="match status" value="1"/>
</dbReference>
<dbReference type="SUPFAM" id="SSF55257">
    <property type="entry name" value="RBP11-like subunits of RNA polymerase"/>
    <property type="match status" value="1"/>
</dbReference>
<organism>
    <name type="scientific">Francisella tularensis subsp. tularensis (strain SCHU S4 / Schu 4)</name>
    <dbReference type="NCBI Taxonomy" id="177416"/>
    <lineage>
        <taxon>Bacteria</taxon>
        <taxon>Pseudomonadati</taxon>
        <taxon>Pseudomonadota</taxon>
        <taxon>Gammaproteobacteria</taxon>
        <taxon>Thiotrichales</taxon>
        <taxon>Francisellaceae</taxon>
        <taxon>Francisella</taxon>
    </lineage>
</organism>
<accession>Q5NF12</accession>
<feature type="chain" id="PRO_0000296809" description="DNA-directed RNA polymerase subunit alpha 2">
    <location>
        <begin position="1"/>
        <end position="318"/>
    </location>
</feature>
<feature type="region of interest" description="Alpha N-terminal domain (alpha-NTD)" evidence="1">
    <location>
        <begin position="1"/>
        <end position="227"/>
    </location>
</feature>
<feature type="region of interest" description="Alpha C-terminal domain (alpha-CTD)" evidence="1">
    <location>
        <begin position="242"/>
        <end position="318"/>
    </location>
</feature>
<sequence length="318" mass="35141">MALENLLHPTNIKIDEYAKNATKFSFEALERGVGYTLGFALKQTMLYSIAGACVTSIKINDGKVTSLEDVIPCDETVADIILNVKSLPVTLAEGVETGTITFELSGSEEEIFSEEAKLSEGLAITEEVFICSYNGGKKLKIEAKVEKGVGFRPAQDNFKDGEFLLDATFSPVVFCDFEIKDARVGRRTDLDKLELNIKTNGNVNCEEALRLAATKIQNQLRNILDIEEINKGIFVEDPTKDINPILLKHVEELNLTARSSNCLKAVNIRLIGELVQKTENELLKAPNFGKKSLTEIKDKLSELGLSLGTLIENWPQDL</sequence>
<gene>
    <name evidence="1" type="primary">rpoA2</name>
    <name type="ordered locus">FTT_1442c</name>
</gene>
<comment type="function">
    <text evidence="1">DNA-dependent RNA polymerase catalyzes the transcription of DNA into RNA using the four ribonucleoside triphosphates as substrates.</text>
</comment>
<comment type="catalytic activity">
    <reaction evidence="1">
        <text>RNA(n) + a ribonucleoside 5'-triphosphate = RNA(n+1) + diphosphate</text>
        <dbReference type="Rhea" id="RHEA:21248"/>
        <dbReference type="Rhea" id="RHEA-COMP:14527"/>
        <dbReference type="Rhea" id="RHEA-COMP:17342"/>
        <dbReference type="ChEBI" id="CHEBI:33019"/>
        <dbReference type="ChEBI" id="CHEBI:61557"/>
        <dbReference type="ChEBI" id="CHEBI:140395"/>
        <dbReference type="EC" id="2.7.7.6"/>
    </reaction>
</comment>
<comment type="subunit">
    <text evidence="1">Homodimer. The RNAP catalytic core consists of 2 alpha, 1 beta, 1 beta' and 1 omega subunit. When a sigma factor is associated with the core the holoenzyme is formed, which can initiate transcription.</text>
</comment>
<comment type="domain">
    <text evidence="1">The N-terminal domain is essential for RNAP assembly and basal transcription, whereas the C-terminal domain is involved in interaction with transcriptional regulators and with upstream promoter elements.</text>
</comment>
<comment type="similarity">
    <text evidence="1">Belongs to the RNA polymerase alpha chain family.</text>
</comment>
<name>RPOA2_FRATT</name>